<comment type="function">
    <text evidence="3">Component of the cytochrome c oxidase, the last enzyme in the mitochondrial electron transport chain which drives oxidative phosphorylation. The respiratory chain contains 3 multisubunit complexes succinate dehydrogenase (complex II, CII), ubiquinol-cytochrome c oxidoreductase (cytochrome b-c1 complex, complex III, CIII) and cytochrome c oxidase (complex IV, CIV), that cooperate to transfer electrons derived from NADH and succinate to molecular oxygen, creating an electrochemical gradient over the inner membrane that drives transmembrane transport and the ATP synthase. Cytochrome c oxidase is the component of the respiratory chain that catalyzes the reduction of oxygen to water. Electrons originating from reduced cytochrome c in the intermembrane space (IMS) are transferred via the dinuclear copper A center (CU(A)) of subunit 2 and heme A of subunit 1 to the active site in subunit 1, a binuclear center (BNC) formed by heme A3 and copper B (CU(B)). The BNC reduces molecular oxygen to 2 water molecules using 4 electrons from cytochrome c in the IMS and 4 protons from the mitochondrial matrix.</text>
</comment>
<comment type="catalytic activity">
    <reaction evidence="3">
        <text>4 Fe(II)-[cytochrome c] + O2 + 8 H(+)(in) = 4 Fe(III)-[cytochrome c] + 2 H2O + 4 H(+)(out)</text>
        <dbReference type="Rhea" id="RHEA:11436"/>
        <dbReference type="Rhea" id="RHEA-COMP:10350"/>
        <dbReference type="Rhea" id="RHEA-COMP:14399"/>
        <dbReference type="ChEBI" id="CHEBI:15377"/>
        <dbReference type="ChEBI" id="CHEBI:15378"/>
        <dbReference type="ChEBI" id="CHEBI:15379"/>
        <dbReference type="ChEBI" id="CHEBI:29033"/>
        <dbReference type="ChEBI" id="CHEBI:29034"/>
        <dbReference type="EC" id="7.1.1.9"/>
    </reaction>
    <physiologicalReaction direction="left-to-right" evidence="3">
        <dbReference type="Rhea" id="RHEA:11437"/>
    </physiologicalReaction>
</comment>
<comment type="cofactor">
    <cofactor evidence="4">
        <name>Cu cation</name>
        <dbReference type="ChEBI" id="CHEBI:23378"/>
    </cofactor>
    <text evidence="4">Binds a dinuclear copper A center per subunit.</text>
</comment>
<comment type="subunit">
    <text evidence="1 4">Component of the cytochrome c oxidase (complex IV, CIV), a multisubunit enzyme composed of 14 subunits. The complex is composed of a catalytic core of 3 subunits MT-CO1, MT-CO2 and MT-CO3, encoded in the mitochondrial DNA, and 11 supernumerary subunits COX4I, COX5A, COX5B, COX6A, COX6B, COX6C, COX7A, COX7B, COX7C, COX8 and NDUFA4, which are encoded in the nuclear genome. The complex exists as a monomer or a dimer and forms supercomplexes (SCs) in the inner mitochondrial membrane with NADH-ubiquinone oxidoreductase (complex I, CI) and ubiquinol-cytochrome c oxidoreductase (cytochrome b-c1 complex, complex III, CIII), resulting in different assemblies (supercomplex SCI(1)III(2)IV(1) and megacomplex MCI(2)III(2)IV(2)) (By similarity). Found in a complex with TMEM177, COA6, COX18, COX20, SCO1 and SCO2. Interacts with TMEM177 in a COX20-dependent manner. Interacts with COX20. Interacts with COX16 (By similarity).</text>
</comment>
<comment type="subcellular location">
    <subcellularLocation>
        <location evidence="4">Mitochondrion inner membrane</location>
        <topology evidence="4">Multi-pass membrane protein</topology>
    </subcellularLocation>
</comment>
<comment type="similarity">
    <text evidence="5">Belongs to the cytochrome c oxidase subunit 2 family.</text>
</comment>
<reference key="1">
    <citation type="journal article" date="1996" name="Mol. Phylogenet. Evol.">
        <title>Mitochondrial gene sequences and the molecular systematics of the artiodactyl subfamily bovinae.</title>
        <authorList>
            <person name="Janecek L.L."/>
            <person name="Honeycutt R.L."/>
            <person name="Adkins R.M."/>
            <person name="Davis S.K."/>
        </authorList>
    </citation>
    <scope>NUCLEOTIDE SEQUENCE [GENOMIC DNA]</scope>
</reference>
<geneLocation type="mitochondrion"/>
<organism>
    <name type="scientific">Bison bonasus</name>
    <name type="common">European bison</name>
    <dbReference type="NCBI Taxonomy" id="9902"/>
    <lineage>
        <taxon>Eukaryota</taxon>
        <taxon>Metazoa</taxon>
        <taxon>Chordata</taxon>
        <taxon>Craniata</taxon>
        <taxon>Vertebrata</taxon>
        <taxon>Euteleostomi</taxon>
        <taxon>Mammalia</taxon>
        <taxon>Eutheria</taxon>
        <taxon>Laurasiatheria</taxon>
        <taxon>Artiodactyla</taxon>
        <taxon>Ruminantia</taxon>
        <taxon>Pecora</taxon>
        <taxon>Bovidae</taxon>
        <taxon>Bovinae</taxon>
        <taxon>Bison</taxon>
    </lineage>
</organism>
<accession>P68296</accession>
<accession>P50674</accession>
<protein>
    <recommendedName>
        <fullName>Cytochrome c oxidase subunit 2</fullName>
        <ecNumber>7.1.1.9</ecNumber>
    </recommendedName>
    <alternativeName>
        <fullName>Cytochrome c oxidase polypeptide II</fullName>
    </alternativeName>
</protein>
<sequence>MAYPMQLGFQDATSPIMEELLHFHDHTLMIVFLISSLVLYIISLMLTTKLTHTSTMDAQEVETIWTILPAIILILIALPSLRILYMMDEINNPSLTVKTMGHQWYWSYEYTDYEDLSFDSYMIPTSELKPGELRLLEVDNRVVLPMEMTIRMLVSSEDVLHSWAVPSLGLKTDAIPGRLNQTTLMSTRPGLYYGQCSEICGSNHSFMPIVLELVPLKYFEKWSASML</sequence>
<name>COX2_BISBO</name>
<feature type="chain" id="PRO_0000183511" description="Cytochrome c oxidase subunit 2">
    <location>
        <begin position="1"/>
        <end position="227"/>
    </location>
</feature>
<feature type="topological domain" description="Mitochondrial intermembrane" evidence="4">
    <location>
        <begin position="1"/>
        <end position="14"/>
    </location>
</feature>
<feature type="transmembrane region" description="Helical; Name=I" evidence="4">
    <location>
        <begin position="15"/>
        <end position="45"/>
    </location>
</feature>
<feature type="topological domain" description="Mitochondrial matrix" evidence="4">
    <location>
        <begin position="46"/>
        <end position="59"/>
    </location>
</feature>
<feature type="transmembrane region" description="Helical; Name=II" evidence="4">
    <location>
        <begin position="60"/>
        <end position="87"/>
    </location>
</feature>
<feature type="topological domain" description="Mitochondrial intermembrane" evidence="4">
    <location>
        <begin position="88"/>
        <end position="227"/>
    </location>
</feature>
<feature type="binding site" evidence="4">
    <location>
        <position position="161"/>
    </location>
    <ligand>
        <name>Cu cation</name>
        <dbReference type="ChEBI" id="CHEBI:23378"/>
        <label>A1</label>
    </ligand>
</feature>
<feature type="binding site" evidence="4">
    <location>
        <position position="196"/>
    </location>
    <ligand>
        <name>Cu cation</name>
        <dbReference type="ChEBI" id="CHEBI:23378"/>
        <label>A1</label>
    </ligand>
</feature>
<feature type="binding site" evidence="4">
    <location>
        <position position="196"/>
    </location>
    <ligand>
        <name>Cu cation</name>
        <dbReference type="ChEBI" id="CHEBI:23378"/>
        <label>A2</label>
    </ligand>
</feature>
<feature type="binding site" evidence="4">
    <location>
        <position position="198"/>
    </location>
    <ligand>
        <name>Cu cation</name>
        <dbReference type="ChEBI" id="CHEBI:23378"/>
        <label>A2</label>
    </ligand>
</feature>
<feature type="binding site" evidence="4">
    <location>
        <position position="198"/>
    </location>
    <ligand>
        <name>Mg(2+)</name>
        <dbReference type="ChEBI" id="CHEBI:18420"/>
        <note>ligand shared with MT-CO1</note>
    </ligand>
</feature>
<feature type="binding site" evidence="4">
    <location>
        <position position="200"/>
    </location>
    <ligand>
        <name>Cu cation</name>
        <dbReference type="ChEBI" id="CHEBI:23378"/>
        <label>A1</label>
    </ligand>
</feature>
<feature type="binding site" evidence="4">
    <location>
        <position position="200"/>
    </location>
    <ligand>
        <name>Cu cation</name>
        <dbReference type="ChEBI" id="CHEBI:23378"/>
        <label>A2</label>
    </ligand>
</feature>
<feature type="binding site" evidence="4">
    <location>
        <position position="204"/>
    </location>
    <ligand>
        <name>Cu cation</name>
        <dbReference type="ChEBI" id="CHEBI:23378"/>
        <label>A2</label>
    </ligand>
</feature>
<feature type="binding site" evidence="4">
    <location>
        <position position="207"/>
    </location>
    <ligand>
        <name>Cu cation</name>
        <dbReference type="ChEBI" id="CHEBI:23378"/>
        <label>A1</label>
    </ligand>
</feature>
<feature type="modified residue" description="Phosphotyrosine" evidence="2">
    <location>
        <position position="218"/>
    </location>
</feature>
<dbReference type="EC" id="7.1.1.9"/>
<dbReference type="EMBL" id="U62567">
    <property type="protein sequence ID" value="AAB05778.1"/>
    <property type="molecule type" value="Genomic_DNA"/>
</dbReference>
<dbReference type="RefSeq" id="YP_003587269.1">
    <property type="nucleotide sequence ID" value="NC_014044.1"/>
</dbReference>
<dbReference type="SMR" id="P68296"/>
<dbReference type="GeneID" id="9072763"/>
<dbReference type="CTD" id="4513"/>
<dbReference type="GO" id="GO:0005743">
    <property type="term" value="C:mitochondrial inner membrane"/>
    <property type="evidence" value="ECO:0007669"/>
    <property type="project" value="UniProtKB-SubCell"/>
</dbReference>
<dbReference type="GO" id="GO:0045277">
    <property type="term" value="C:respiratory chain complex IV"/>
    <property type="evidence" value="ECO:0000250"/>
    <property type="project" value="UniProtKB"/>
</dbReference>
<dbReference type="GO" id="GO:0005507">
    <property type="term" value="F:copper ion binding"/>
    <property type="evidence" value="ECO:0007669"/>
    <property type="project" value="InterPro"/>
</dbReference>
<dbReference type="GO" id="GO:0004129">
    <property type="term" value="F:cytochrome-c oxidase activity"/>
    <property type="evidence" value="ECO:0007669"/>
    <property type="project" value="UniProtKB-EC"/>
</dbReference>
<dbReference type="GO" id="GO:0042773">
    <property type="term" value="P:ATP synthesis coupled electron transport"/>
    <property type="evidence" value="ECO:0007669"/>
    <property type="project" value="TreeGrafter"/>
</dbReference>
<dbReference type="CDD" id="cd13912">
    <property type="entry name" value="CcO_II_C"/>
    <property type="match status" value="1"/>
</dbReference>
<dbReference type="FunFam" id="1.10.287.90:FF:000001">
    <property type="entry name" value="Cytochrome c oxidase subunit 2"/>
    <property type="match status" value="1"/>
</dbReference>
<dbReference type="FunFam" id="2.60.40.420:FF:000001">
    <property type="entry name" value="Cytochrome c oxidase subunit 2"/>
    <property type="match status" value="1"/>
</dbReference>
<dbReference type="Gene3D" id="1.10.287.90">
    <property type="match status" value="1"/>
</dbReference>
<dbReference type="Gene3D" id="2.60.40.420">
    <property type="entry name" value="Cupredoxins - blue copper proteins"/>
    <property type="match status" value="1"/>
</dbReference>
<dbReference type="InterPro" id="IPR045187">
    <property type="entry name" value="CcO_II"/>
</dbReference>
<dbReference type="InterPro" id="IPR002429">
    <property type="entry name" value="CcO_II-like_C"/>
</dbReference>
<dbReference type="InterPro" id="IPR034210">
    <property type="entry name" value="CcO_II_C"/>
</dbReference>
<dbReference type="InterPro" id="IPR001505">
    <property type="entry name" value="Copper_CuA"/>
</dbReference>
<dbReference type="InterPro" id="IPR008972">
    <property type="entry name" value="Cupredoxin"/>
</dbReference>
<dbReference type="InterPro" id="IPR014222">
    <property type="entry name" value="Cyt_c_oxidase_su2"/>
</dbReference>
<dbReference type="InterPro" id="IPR011759">
    <property type="entry name" value="Cyt_c_oxidase_su2_TM_dom"/>
</dbReference>
<dbReference type="InterPro" id="IPR036257">
    <property type="entry name" value="Cyt_c_oxidase_su2_TM_sf"/>
</dbReference>
<dbReference type="NCBIfam" id="TIGR02866">
    <property type="entry name" value="CoxB"/>
    <property type="match status" value="1"/>
</dbReference>
<dbReference type="PANTHER" id="PTHR22888:SF9">
    <property type="entry name" value="CYTOCHROME C OXIDASE SUBUNIT 2"/>
    <property type="match status" value="1"/>
</dbReference>
<dbReference type="PANTHER" id="PTHR22888">
    <property type="entry name" value="CYTOCHROME C OXIDASE, SUBUNIT II"/>
    <property type="match status" value="1"/>
</dbReference>
<dbReference type="Pfam" id="PF00116">
    <property type="entry name" value="COX2"/>
    <property type="match status" value="1"/>
</dbReference>
<dbReference type="Pfam" id="PF02790">
    <property type="entry name" value="COX2_TM"/>
    <property type="match status" value="1"/>
</dbReference>
<dbReference type="PRINTS" id="PR01166">
    <property type="entry name" value="CYCOXIDASEII"/>
</dbReference>
<dbReference type="SUPFAM" id="SSF49503">
    <property type="entry name" value="Cupredoxins"/>
    <property type="match status" value="1"/>
</dbReference>
<dbReference type="SUPFAM" id="SSF81464">
    <property type="entry name" value="Cytochrome c oxidase subunit II-like, transmembrane region"/>
    <property type="match status" value="1"/>
</dbReference>
<dbReference type="PROSITE" id="PS00078">
    <property type="entry name" value="COX2"/>
    <property type="match status" value="1"/>
</dbReference>
<dbReference type="PROSITE" id="PS50857">
    <property type="entry name" value="COX2_CUA"/>
    <property type="match status" value="1"/>
</dbReference>
<dbReference type="PROSITE" id="PS50999">
    <property type="entry name" value="COX2_TM"/>
    <property type="match status" value="1"/>
</dbReference>
<keyword id="KW-0186">Copper</keyword>
<keyword id="KW-0249">Electron transport</keyword>
<keyword id="KW-0460">Magnesium</keyword>
<keyword id="KW-0472">Membrane</keyword>
<keyword id="KW-0479">Metal-binding</keyword>
<keyword id="KW-0496">Mitochondrion</keyword>
<keyword id="KW-0999">Mitochondrion inner membrane</keyword>
<keyword id="KW-0597">Phosphoprotein</keyword>
<keyword id="KW-0679">Respiratory chain</keyword>
<keyword id="KW-1278">Translocase</keyword>
<keyword id="KW-0812">Transmembrane</keyword>
<keyword id="KW-1133">Transmembrane helix</keyword>
<keyword id="KW-0813">Transport</keyword>
<proteinExistence type="inferred from homology"/>
<evidence type="ECO:0000250" key="1">
    <source>
        <dbReference type="UniProtKB" id="P00403"/>
    </source>
</evidence>
<evidence type="ECO:0000250" key="2">
    <source>
        <dbReference type="UniProtKB" id="P00406"/>
    </source>
</evidence>
<evidence type="ECO:0000250" key="3">
    <source>
        <dbReference type="UniProtKB" id="P00410"/>
    </source>
</evidence>
<evidence type="ECO:0000250" key="4">
    <source>
        <dbReference type="UniProtKB" id="P68530"/>
    </source>
</evidence>
<evidence type="ECO:0000305" key="5"/>
<gene>
    <name type="primary">MT-CO2</name>
    <name type="synonym">COII</name>
    <name type="synonym">COX2</name>
    <name type="synonym">COXII</name>
    <name type="synonym">MTCO2</name>
</gene>